<sequence length="343" mass="37723">MTLCIKNGFLAAALVLVGLLICSIQMIGAQSIGVCYGKHANNLPSDQDVINLYNANGIRKMRIYNPDTNVFNALRGSNIEIILDVPLQDLQSLTDPSRANGWVQDNIINHFPDVKFKYIAVGNEVSPGNNGQYAPFVAPAMQNVYNALAAAGLQDQIKVSTATYSGILANTYPPKDSIFRGEFNSFINPIIQFLVQHNLPLLANVYPYFGHIFNTADVPLSYALFTQQEANPAGYQNLFDALLDSMYFAVEKAGGQNVEIIVSESGWPSEGNSAATIENAQTYYENLINHVKSGAGTPKKPGKAIETYLFAMFDENNKEGDITEKHFGLFSPDQRAKYQLNFN</sequence>
<evidence type="ECO:0000250" key="1">
    <source>
        <dbReference type="UniProtKB" id="O22317"/>
    </source>
</evidence>
<evidence type="ECO:0000250" key="2">
    <source>
        <dbReference type="UniProtKB" id="P15797"/>
    </source>
</evidence>
<evidence type="ECO:0000305" key="3"/>
<organism>
    <name type="scientific">Nicotiana tabacum</name>
    <name type="common">Common tobacco</name>
    <dbReference type="NCBI Taxonomy" id="4097"/>
    <lineage>
        <taxon>Eukaryota</taxon>
        <taxon>Viridiplantae</taxon>
        <taxon>Streptophyta</taxon>
        <taxon>Embryophyta</taxon>
        <taxon>Tracheophyta</taxon>
        <taxon>Spermatophyta</taxon>
        <taxon>Magnoliopsida</taxon>
        <taxon>eudicotyledons</taxon>
        <taxon>Gunneridae</taxon>
        <taxon>Pentapetalae</taxon>
        <taxon>asterids</taxon>
        <taxon>lamiids</taxon>
        <taxon>Solanales</taxon>
        <taxon>Solanaceae</taxon>
        <taxon>Nicotianoideae</taxon>
        <taxon>Nicotianeae</taxon>
        <taxon>Nicotiana</taxon>
    </lineage>
</organism>
<protein>
    <recommendedName>
        <fullName>Glucan endo-1,3-beta-glucosidase, acidic isoform GI9</fullName>
        <ecNumber>3.2.1.39</ecNumber>
    </recommendedName>
    <alternativeName>
        <fullName>(1-&gt;3)-beta-glucan endohydrolase</fullName>
        <shortName>(1-&gt;3)-beta-glucanase</shortName>
    </alternativeName>
    <alternativeName>
        <fullName>Beta-1,3-endoglucanase</fullName>
    </alternativeName>
    <alternativeName>
        <fullName>PR-2B</fullName>
    </alternativeName>
    <alternativeName>
        <fullName>PR-36</fullName>
    </alternativeName>
</protein>
<accession>P23547</accession>
<gene>
    <name type="primary">PR2</name>
</gene>
<keyword id="KW-0903">Direct protein sequencing</keyword>
<keyword id="KW-0326">Glycosidase</keyword>
<keyword id="KW-0378">Hydrolase</keyword>
<keyword id="KW-0611">Plant defense</keyword>
<keyword id="KW-0873">Pyrrolidone carboxylic acid</keyword>
<keyword id="KW-1185">Reference proteome</keyword>
<keyword id="KW-0964">Secreted</keyword>
<keyword id="KW-0732">Signal</keyword>
<feature type="signal peptide" evidence="3">
    <location>
        <begin position="1"/>
        <end position="29"/>
    </location>
</feature>
<feature type="chain" id="PRO_0000011877" description="Glucan endo-1,3-beta-glucosidase, acidic isoform GI9">
    <location>
        <begin position="30"/>
        <end position="343"/>
    </location>
</feature>
<feature type="active site" description="Proton donor" evidence="1">
    <location>
        <position position="124"/>
    </location>
</feature>
<feature type="active site" description="Nucleophile" evidence="1">
    <location>
        <position position="264"/>
    </location>
</feature>
<feature type="modified residue" description="Pyrrolidone carboxylic acid" evidence="2">
    <location>
        <position position="30"/>
    </location>
</feature>
<feature type="sequence conflict" description="In Ref. 2; AAA34103." evidence="3" ref="2">
    <original>N</original>
    <variation>D</variation>
    <location>
        <position position="54"/>
    </location>
</feature>
<feature type="sequence conflict" description="In Ref. 2; AAA34103." evidence="3" ref="2">
    <original>Y</original>
    <variation>N</variation>
    <location>
        <position position="172"/>
    </location>
</feature>
<feature type="sequence conflict" description="In Ref. 2; AAA34103." evidence="3" ref="2">
    <original>K</original>
    <variation>N</variation>
    <location>
        <position position="303"/>
    </location>
</feature>
<feature type="sequence conflict" description="In Ref. 2; AA sequence." evidence="3" ref="2">
    <location>
        <position position="323"/>
    </location>
</feature>
<dbReference type="EC" id="3.2.1.39"/>
<dbReference type="EMBL" id="M59443">
    <property type="protein sequence ID" value="AAA63542.1"/>
    <property type="molecule type" value="Genomic_DNA"/>
</dbReference>
<dbReference type="EMBL" id="M60460">
    <property type="protein sequence ID" value="AAA34103.1"/>
    <property type="molecule type" value="mRNA"/>
</dbReference>
<dbReference type="PIR" id="B38257">
    <property type="entry name" value="B38257"/>
</dbReference>
<dbReference type="PIR" id="C38257">
    <property type="entry name" value="C38257"/>
</dbReference>
<dbReference type="SMR" id="P23547"/>
<dbReference type="STRING" id="4097.P23547"/>
<dbReference type="CAZy" id="GH17">
    <property type="family name" value="Glycoside Hydrolase Family 17"/>
</dbReference>
<dbReference type="PaxDb" id="4097-P23547"/>
<dbReference type="Proteomes" id="UP000084051">
    <property type="component" value="Unplaced"/>
</dbReference>
<dbReference type="GO" id="GO:0005576">
    <property type="term" value="C:extracellular region"/>
    <property type="evidence" value="ECO:0007669"/>
    <property type="project" value="UniProtKB-SubCell"/>
</dbReference>
<dbReference type="GO" id="GO:0042973">
    <property type="term" value="F:glucan endo-1,3-beta-D-glucosidase activity"/>
    <property type="evidence" value="ECO:0007669"/>
    <property type="project" value="UniProtKB-EC"/>
</dbReference>
<dbReference type="GO" id="GO:0005975">
    <property type="term" value="P:carbohydrate metabolic process"/>
    <property type="evidence" value="ECO:0007669"/>
    <property type="project" value="InterPro"/>
</dbReference>
<dbReference type="GO" id="GO:0006952">
    <property type="term" value="P:defense response"/>
    <property type="evidence" value="ECO:0007669"/>
    <property type="project" value="UniProtKB-KW"/>
</dbReference>
<dbReference type="FunFam" id="3.20.20.80:FF:000010">
    <property type="entry name" value="glucan endo-1,3-beta-glucosidase, basic"/>
    <property type="match status" value="1"/>
</dbReference>
<dbReference type="Gene3D" id="3.20.20.80">
    <property type="entry name" value="Glycosidases"/>
    <property type="match status" value="1"/>
</dbReference>
<dbReference type="InterPro" id="IPR000490">
    <property type="entry name" value="Glyco_hydro_17"/>
</dbReference>
<dbReference type="InterPro" id="IPR044965">
    <property type="entry name" value="Glyco_hydro_17_plant"/>
</dbReference>
<dbReference type="InterPro" id="IPR017853">
    <property type="entry name" value="Glycoside_hydrolase_SF"/>
</dbReference>
<dbReference type="PANTHER" id="PTHR32227">
    <property type="entry name" value="GLUCAN ENDO-1,3-BETA-GLUCOSIDASE BG1-RELATED-RELATED"/>
    <property type="match status" value="1"/>
</dbReference>
<dbReference type="Pfam" id="PF00332">
    <property type="entry name" value="Glyco_hydro_17"/>
    <property type="match status" value="1"/>
</dbReference>
<dbReference type="SUPFAM" id="SSF51445">
    <property type="entry name" value="(Trans)glycosidases"/>
    <property type="match status" value="1"/>
</dbReference>
<dbReference type="PROSITE" id="PS00587">
    <property type="entry name" value="GLYCOSYL_HYDROL_F17"/>
    <property type="match status" value="1"/>
</dbReference>
<comment type="function">
    <text>Implicated in the defense of plants against pathogens.</text>
</comment>
<comment type="catalytic activity">
    <reaction>
        <text>Hydrolysis of (1-&gt;3)-beta-D-glucosidic linkages in (1-&gt;3)-beta-D-glucans.</text>
        <dbReference type="EC" id="3.2.1.39"/>
    </reaction>
</comment>
<comment type="subcellular location">
    <subcellularLocation>
        <location>Secreted</location>
        <location>Extracellular space</location>
    </subcellularLocation>
</comment>
<comment type="induction">
    <text>Not found in healthy tissues, but accumulates to high levels in the extracellular compartment of leaves in response to pathogen infection or treatment with salicylic acid.</text>
</comment>
<comment type="similarity">
    <text evidence="3">Belongs to the glycosyl hydrolase 17 family.</text>
</comment>
<reference key="1">
    <citation type="journal article" date="1990" name="Proc. Natl. Acad. Sci. U.S.A.">
        <title>Analysis of gene families encoding acidic and basic beta-1,3-glucanases of tobacco.</title>
        <authorList>
            <person name="Linthorst H.J.M."/>
            <person name="Melchers L.S."/>
            <person name="Mayer A."/>
            <person name="van Roekel J.S.C."/>
            <person name="Cornelissen B.J.C."/>
            <person name="Bol J.F."/>
        </authorList>
    </citation>
    <scope>NUCLEOTIDE SEQUENCE [GENOMIC DNA]</scope>
    <source>
        <strain>cv. Samsun NN</strain>
    </source>
</reference>
<reference key="2">
    <citation type="journal article" date="1991" name="Plant Physiol.">
        <title>Differential regulation of beta-1,3-glucanase messenger RNAs in response to pathogen infection.</title>
        <authorList>
            <person name="Ward E.R."/>
            <person name="Payne G.B."/>
            <person name="Moyer M.B."/>
            <person name="Williams S.C."/>
            <person name="Dincher S.S."/>
            <person name="Sharkey K.C."/>
            <person name="Beck J.J."/>
            <person name="Taylor H.T."/>
            <person name="Ahl-Goy P."/>
            <person name="Meins F."/>
            <person name="Ryals J.A."/>
        </authorList>
    </citation>
    <scope>NUCLEOTIDE SEQUENCE [MRNA]</scope>
    <scope>PARTIAL PROTEIN SEQUENCE</scope>
    <source>
        <strain>cv. Xanthi NC</strain>
        <tissue>Leaf</tissue>
    </source>
</reference>
<reference key="3">
    <citation type="journal article" date="1989" name="Proc. Natl. Acad. Sci. U.S.A.">
        <title>Characterization of vacuolar and extracellular beta(1,3)-glucanases of tobacco: evidence for a strictly compartmentalized plant defense system.</title>
        <authorList>
            <person name="van den Bulcke M."/>
            <person name="Bauw G."/>
            <person name="Castresana C."/>
            <person name="van Montagu M."/>
            <person name="Vandekerckhove J."/>
        </authorList>
    </citation>
    <scope>PROTEIN SEQUENCE OF 39-115; 157-158; 253-276 AND 338-343</scope>
</reference>
<name>E13G_TOBAC</name>
<proteinExistence type="evidence at protein level"/>